<reference key="1">
    <citation type="journal article" date="2009" name="Genome Res.">
        <title>Newly introduced genomic prophage islands are critical determinants of in vivo competitiveness in the Liverpool epidemic strain of Pseudomonas aeruginosa.</title>
        <authorList>
            <person name="Winstanley C."/>
            <person name="Langille M.G.I."/>
            <person name="Fothergill J.L."/>
            <person name="Kukavica-Ibrulj I."/>
            <person name="Paradis-Bleau C."/>
            <person name="Sanschagrin F."/>
            <person name="Thomson N.R."/>
            <person name="Winsor G.L."/>
            <person name="Quail M.A."/>
            <person name="Lennard N."/>
            <person name="Bignell A."/>
            <person name="Clarke L."/>
            <person name="Seeger K."/>
            <person name="Saunders D."/>
            <person name="Harris D."/>
            <person name="Parkhill J."/>
            <person name="Hancock R.E.W."/>
            <person name="Brinkman F.S.L."/>
            <person name="Levesque R.C."/>
        </authorList>
    </citation>
    <scope>NUCLEOTIDE SEQUENCE [LARGE SCALE GENOMIC DNA]</scope>
    <source>
        <strain>LESB58</strain>
    </source>
</reference>
<sequence length="248" mass="27290">MTEATRILLGVNIDHVATLRQARGTRYPDPVKAALDAEEAGADGITVHLREDRRHIQERDVRVLKEVLQTRMNFEMGVTEEMLAFAEEIRPAHSCLVPERREELTTEGGLDVAGQEQRIRDAVRRLAAVGSEVSLFIDPDPRQIEASARVGAPAIELHTGRYADAEDPEEQTRELQRVREGVALGRSLGLIVNAGHGLHYHNVEPVAAIDGINELNIGHAIVAHALFVGFRQAVAEMKALMLAAATKR</sequence>
<proteinExistence type="inferred from homology"/>
<dbReference type="EC" id="2.6.99.2" evidence="1"/>
<dbReference type="EMBL" id="FM209186">
    <property type="protein sequence ID" value="CAW29324.1"/>
    <property type="molecule type" value="Genomic_DNA"/>
</dbReference>
<dbReference type="RefSeq" id="WP_012614478.1">
    <property type="nucleotide sequence ID" value="NC_011770.1"/>
</dbReference>
<dbReference type="SMR" id="B7UYW9"/>
<dbReference type="KEGG" id="pag:PLES_45701"/>
<dbReference type="HOGENOM" id="CLU_074563_0_0_6"/>
<dbReference type="UniPathway" id="UPA00244">
    <property type="reaction ID" value="UER00313"/>
</dbReference>
<dbReference type="GO" id="GO:0005829">
    <property type="term" value="C:cytosol"/>
    <property type="evidence" value="ECO:0007669"/>
    <property type="project" value="TreeGrafter"/>
</dbReference>
<dbReference type="GO" id="GO:0033856">
    <property type="term" value="F:pyridoxine 5'-phosphate synthase activity"/>
    <property type="evidence" value="ECO:0007669"/>
    <property type="project" value="UniProtKB-EC"/>
</dbReference>
<dbReference type="GO" id="GO:0008615">
    <property type="term" value="P:pyridoxine biosynthetic process"/>
    <property type="evidence" value="ECO:0007669"/>
    <property type="project" value="UniProtKB-UniRule"/>
</dbReference>
<dbReference type="CDD" id="cd00003">
    <property type="entry name" value="PNPsynthase"/>
    <property type="match status" value="1"/>
</dbReference>
<dbReference type="FunFam" id="3.20.20.70:FF:000042">
    <property type="entry name" value="Pyridoxine 5'-phosphate synthase"/>
    <property type="match status" value="1"/>
</dbReference>
<dbReference type="Gene3D" id="3.20.20.70">
    <property type="entry name" value="Aldolase class I"/>
    <property type="match status" value="1"/>
</dbReference>
<dbReference type="HAMAP" id="MF_00279">
    <property type="entry name" value="PdxJ"/>
    <property type="match status" value="1"/>
</dbReference>
<dbReference type="InterPro" id="IPR013785">
    <property type="entry name" value="Aldolase_TIM"/>
</dbReference>
<dbReference type="InterPro" id="IPR004569">
    <property type="entry name" value="PyrdxlP_synth_PdxJ"/>
</dbReference>
<dbReference type="InterPro" id="IPR036130">
    <property type="entry name" value="Pyridoxine-5'_phos_synth"/>
</dbReference>
<dbReference type="NCBIfam" id="TIGR00559">
    <property type="entry name" value="pdxJ"/>
    <property type="match status" value="1"/>
</dbReference>
<dbReference type="NCBIfam" id="NF003623">
    <property type="entry name" value="PRK05265.1-1"/>
    <property type="match status" value="1"/>
</dbReference>
<dbReference type="NCBIfam" id="NF003625">
    <property type="entry name" value="PRK05265.1-3"/>
    <property type="match status" value="1"/>
</dbReference>
<dbReference type="NCBIfam" id="NF003627">
    <property type="entry name" value="PRK05265.1-5"/>
    <property type="match status" value="1"/>
</dbReference>
<dbReference type="PANTHER" id="PTHR30456">
    <property type="entry name" value="PYRIDOXINE 5'-PHOSPHATE SYNTHASE"/>
    <property type="match status" value="1"/>
</dbReference>
<dbReference type="PANTHER" id="PTHR30456:SF0">
    <property type="entry name" value="PYRIDOXINE 5'-PHOSPHATE SYNTHASE"/>
    <property type="match status" value="1"/>
</dbReference>
<dbReference type="Pfam" id="PF03740">
    <property type="entry name" value="PdxJ"/>
    <property type="match status" value="1"/>
</dbReference>
<dbReference type="SUPFAM" id="SSF63892">
    <property type="entry name" value="Pyridoxine 5'-phosphate synthase"/>
    <property type="match status" value="1"/>
</dbReference>
<protein>
    <recommendedName>
        <fullName evidence="1">Pyridoxine 5'-phosphate synthase</fullName>
        <shortName evidence="1">PNP synthase</shortName>
        <ecNumber evidence="1">2.6.99.2</ecNumber>
    </recommendedName>
</protein>
<accession>B7UYW9</accession>
<evidence type="ECO:0000255" key="1">
    <source>
        <dbReference type="HAMAP-Rule" id="MF_00279"/>
    </source>
</evidence>
<keyword id="KW-0963">Cytoplasm</keyword>
<keyword id="KW-0664">Pyridoxine biosynthesis</keyword>
<keyword id="KW-0808">Transferase</keyword>
<name>PDXJ_PSEA8</name>
<feature type="chain" id="PRO_1000119382" description="Pyridoxine 5'-phosphate synthase">
    <location>
        <begin position="1"/>
        <end position="248"/>
    </location>
</feature>
<feature type="active site" description="Proton acceptor" evidence="1">
    <location>
        <position position="48"/>
    </location>
</feature>
<feature type="active site" description="Proton acceptor" evidence="1">
    <location>
        <position position="75"/>
    </location>
</feature>
<feature type="active site" description="Proton donor" evidence="1">
    <location>
        <position position="196"/>
    </location>
</feature>
<feature type="binding site" evidence="1">
    <location>
        <position position="12"/>
    </location>
    <ligand>
        <name>3-amino-2-oxopropyl phosphate</name>
        <dbReference type="ChEBI" id="CHEBI:57279"/>
    </ligand>
</feature>
<feature type="binding site" evidence="1">
    <location>
        <begin position="14"/>
        <end position="15"/>
    </location>
    <ligand>
        <name>1-deoxy-D-xylulose 5-phosphate</name>
        <dbReference type="ChEBI" id="CHEBI:57792"/>
    </ligand>
</feature>
<feature type="binding site" evidence="1">
    <location>
        <position position="23"/>
    </location>
    <ligand>
        <name>3-amino-2-oxopropyl phosphate</name>
        <dbReference type="ChEBI" id="CHEBI:57279"/>
    </ligand>
</feature>
<feature type="binding site" evidence="1">
    <location>
        <position position="50"/>
    </location>
    <ligand>
        <name>1-deoxy-D-xylulose 5-phosphate</name>
        <dbReference type="ChEBI" id="CHEBI:57792"/>
    </ligand>
</feature>
<feature type="binding site" evidence="1">
    <location>
        <position position="55"/>
    </location>
    <ligand>
        <name>1-deoxy-D-xylulose 5-phosphate</name>
        <dbReference type="ChEBI" id="CHEBI:57792"/>
    </ligand>
</feature>
<feature type="binding site" evidence="1">
    <location>
        <position position="105"/>
    </location>
    <ligand>
        <name>1-deoxy-D-xylulose 5-phosphate</name>
        <dbReference type="ChEBI" id="CHEBI:57792"/>
    </ligand>
</feature>
<feature type="binding site" evidence="1">
    <location>
        <position position="197"/>
    </location>
    <ligand>
        <name>3-amino-2-oxopropyl phosphate</name>
        <dbReference type="ChEBI" id="CHEBI:57279"/>
    </ligand>
</feature>
<feature type="binding site" evidence="1">
    <location>
        <begin position="218"/>
        <end position="219"/>
    </location>
    <ligand>
        <name>3-amino-2-oxopropyl phosphate</name>
        <dbReference type="ChEBI" id="CHEBI:57279"/>
    </ligand>
</feature>
<feature type="site" description="Transition state stabilizer" evidence="1">
    <location>
        <position position="156"/>
    </location>
</feature>
<comment type="function">
    <text evidence="1">Catalyzes the complicated ring closure reaction between the two acyclic compounds 1-deoxy-D-xylulose-5-phosphate (DXP) and 3-amino-2-oxopropyl phosphate (1-amino-acetone-3-phosphate or AAP) to form pyridoxine 5'-phosphate (PNP) and inorganic phosphate.</text>
</comment>
<comment type="catalytic activity">
    <reaction evidence="1">
        <text>3-amino-2-oxopropyl phosphate + 1-deoxy-D-xylulose 5-phosphate = pyridoxine 5'-phosphate + phosphate + 2 H2O + H(+)</text>
        <dbReference type="Rhea" id="RHEA:15265"/>
        <dbReference type="ChEBI" id="CHEBI:15377"/>
        <dbReference type="ChEBI" id="CHEBI:15378"/>
        <dbReference type="ChEBI" id="CHEBI:43474"/>
        <dbReference type="ChEBI" id="CHEBI:57279"/>
        <dbReference type="ChEBI" id="CHEBI:57792"/>
        <dbReference type="ChEBI" id="CHEBI:58589"/>
        <dbReference type="EC" id="2.6.99.2"/>
    </reaction>
</comment>
<comment type="pathway">
    <text evidence="1">Cofactor biosynthesis; pyridoxine 5'-phosphate biosynthesis; pyridoxine 5'-phosphate from D-erythrose 4-phosphate: step 5/5.</text>
</comment>
<comment type="subunit">
    <text evidence="1">Homooctamer; tetramer of dimers.</text>
</comment>
<comment type="subcellular location">
    <subcellularLocation>
        <location evidence="1">Cytoplasm</location>
    </subcellularLocation>
</comment>
<comment type="similarity">
    <text evidence="1">Belongs to the PNP synthase family.</text>
</comment>
<organism>
    <name type="scientific">Pseudomonas aeruginosa (strain LESB58)</name>
    <dbReference type="NCBI Taxonomy" id="557722"/>
    <lineage>
        <taxon>Bacteria</taxon>
        <taxon>Pseudomonadati</taxon>
        <taxon>Pseudomonadota</taxon>
        <taxon>Gammaproteobacteria</taxon>
        <taxon>Pseudomonadales</taxon>
        <taxon>Pseudomonadaceae</taxon>
        <taxon>Pseudomonas</taxon>
    </lineage>
</organism>
<gene>
    <name evidence="1" type="primary">pdxJ</name>
    <name type="ordered locus">PLES_45701</name>
</gene>